<protein>
    <recommendedName>
        <fullName evidence="1">tRNA pseudouridine synthase A</fullName>
        <ecNumber evidence="1">5.4.99.12</ecNumber>
    </recommendedName>
    <alternativeName>
        <fullName evidence="1">tRNA pseudouridine(38-40) synthase</fullName>
    </alternativeName>
    <alternativeName>
        <fullName evidence="1">tRNA pseudouridylate synthase I</fullName>
    </alternativeName>
    <alternativeName>
        <fullName evidence="1">tRNA-uridine isomerase I</fullName>
    </alternativeName>
</protein>
<feature type="chain" id="PRO_1000097766" description="tRNA pseudouridine synthase A">
    <location>
        <begin position="1"/>
        <end position="245"/>
    </location>
</feature>
<feature type="active site" description="Nucleophile" evidence="1">
    <location>
        <position position="52"/>
    </location>
</feature>
<feature type="binding site" evidence="1">
    <location>
        <position position="111"/>
    </location>
    <ligand>
        <name>substrate</name>
    </ligand>
</feature>
<reference key="1">
    <citation type="journal article" date="2008" name="J. Bacteriol.">
        <title>Genome sequence of the chemolithoautotrophic bacterium Oligotropha carboxidovorans OM5T.</title>
        <authorList>
            <person name="Paul D."/>
            <person name="Bridges S."/>
            <person name="Burgess S.C."/>
            <person name="Dandass Y."/>
            <person name="Lawrence M.L."/>
        </authorList>
    </citation>
    <scope>NUCLEOTIDE SEQUENCE [LARGE SCALE GENOMIC DNA]</scope>
    <source>
        <strain>ATCC 49405 / DSM 1227 / KCTC 32145 / OM5</strain>
    </source>
</reference>
<reference key="2">
    <citation type="journal article" date="2011" name="J. Bacteriol.">
        <title>Complete genome sequences of the chemolithoautotrophic Oligotropha carboxidovorans strains OM4 and OM5.</title>
        <authorList>
            <person name="Volland S."/>
            <person name="Rachinger M."/>
            <person name="Strittmatter A."/>
            <person name="Daniel R."/>
            <person name="Gottschalk G."/>
            <person name="Meyer O."/>
        </authorList>
    </citation>
    <scope>NUCLEOTIDE SEQUENCE [LARGE SCALE GENOMIC DNA]</scope>
    <source>
        <strain>ATCC 49405 / DSM 1227 / KCTC 32145 / OM5</strain>
    </source>
</reference>
<organism>
    <name type="scientific">Afipia carboxidovorans (strain ATCC 49405 / DSM 1227 / KCTC 32145 / OM5)</name>
    <name type="common">Oligotropha carboxidovorans</name>
    <dbReference type="NCBI Taxonomy" id="504832"/>
    <lineage>
        <taxon>Bacteria</taxon>
        <taxon>Pseudomonadati</taxon>
        <taxon>Pseudomonadota</taxon>
        <taxon>Alphaproteobacteria</taxon>
        <taxon>Hyphomicrobiales</taxon>
        <taxon>Nitrobacteraceae</taxon>
        <taxon>Afipia</taxon>
    </lineage>
</organism>
<name>TRUA_AFIC5</name>
<evidence type="ECO:0000255" key="1">
    <source>
        <dbReference type="HAMAP-Rule" id="MF_00171"/>
    </source>
</evidence>
<accession>B6JJP6</accession>
<accession>F8BWX4</accession>
<sequence length="245" mass="27217">MPRYKLLIEYDGTPFCGWQYQDNGPSVQGALEDAVAALAGTHVRVHGAGRTDAGVHALGQVAHIDLEKSYRTDQVRDALNAHLRPHPIGVLSAEIVPETFESRFSAVKRHYIYRISNRRANLALDLHRAWRIARTLDVAAMHEAAQVLVGRHDFTTFRDTECQAKSPEKTLDQLDVTREGDAVSIVTSARSFLHSQVRSMVGSLVWVGHGRWTIADMRNALAARDRTACGPVAPPEGLYLVRVDY</sequence>
<gene>
    <name evidence="1" type="primary">truA</name>
    <name type="ordered locus">OCAR_7538</name>
    <name type="ordered locus">OCA5_c06020</name>
</gene>
<dbReference type="EC" id="5.4.99.12" evidence="1"/>
<dbReference type="EMBL" id="CP001196">
    <property type="protein sequence ID" value="ACI94640.1"/>
    <property type="molecule type" value="Genomic_DNA"/>
</dbReference>
<dbReference type="EMBL" id="CP002826">
    <property type="protein sequence ID" value="AEI05326.1"/>
    <property type="molecule type" value="Genomic_DNA"/>
</dbReference>
<dbReference type="RefSeq" id="WP_012564664.1">
    <property type="nucleotide sequence ID" value="NC_015684.1"/>
</dbReference>
<dbReference type="SMR" id="B6JJP6"/>
<dbReference type="STRING" id="504832.OCA5_c06020"/>
<dbReference type="KEGG" id="oca:OCAR_7538"/>
<dbReference type="KEGG" id="ocg:OCA5_c06020"/>
<dbReference type="PATRIC" id="fig|504832.7.peg.630"/>
<dbReference type="eggNOG" id="COG0101">
    <property type="taxonomic scope" value="Bacteria"/>
</dbReference>
<dbReference type="HOGENOM" id="CLU_014673_0_2_5"/>
<dbReference type="OrthoDB" id="9811823at2"/>
<dbReference type="Proteomes" id="UP000007730">
    <property type="component" value="Chromosome"/>
</dbReference>
<dbReference type="GO" id="GO:0003723">
    <property type="term" value="F:RNA binding"/>
    <property type="evidence" value="ECO:0007669"/>
    <property type="project" value="InterPro"/>
</dbReference>
<dbReference type="GO" id="GO:0160147">
    <property type="term" value="F:tRNA pseudouridine(38-40) synthase activity"/>
    <property type="evidence" value="ECO:0007669"/>
    <property type="project" value="UniProtKB-EC"/>
</dbReference>
<dbReference type="GO" id="GO:0031119">
    <property type="term" value="P:tRNA pseudouridine synthesis"/>
    <property type="evidence" value="ECO:0007669"/>
    <property type="project" value="UniProtKB-UniRule"/>
</dbReference>
<dbReference type="CDD" id="cd02570">
    <property type="entry name" value="PseudoU_synth_EcTruA"/>
    <property type="match status" value="1"/>
</dbReference>
<dbReference type="FunFam" id="3.30.70.580:FF:000001">
    <property type="entry name" value="tRNA pseudouridine synthase A"/>
    <property type="match status" value="1"/>
</dbReference>
<dbReference type="Gene3D" id="3.30.70.660">
    <property type="entry name" value="Pseudouridine synthase I, catalytic domain, C-terminal subdomain"/>
    <property type="match status" value="1"/>
</dbReference>
<dbReference type="Gene3D" id="3.30.70.580">
    <property type="entry name" value="Pseudouridine synthase I, catalytic domain, N-terminal subdomain"/>
    <property type="match status" value="1"/>
</dbReference>
<dbReference type="HAMAP" id="MF_00171">
    <property type="entry name" value="TruA"/>
    <property type="match status" value="1"/>
</dbReference>
<dbReference type="InterPro" id="IPR020103">
    <property type="entry name" value="PsdUridine_synth_cat_dom_sf"/>
</dbReference>
<dbReference type="InterPro" id="IPR001406">
    <property type="entry name" value="PsdUridine_synth_TruA"/>
</dbReference>
<dbReference type="InterPro" id="IPR020097">
    <property type="entry name" value="PsdUridine_synth_TruA_a/b_dom"/>
</dbReference>
<dbReference type="InterPro" id="IPR020095">
    <property type="entry name" value="PsdUridine_synth_TruA_C"/>
</dbReference>
<dbReference type="InterPro" id="IPR020094">
    <property type="entry name" value="TruA/RsuA/RluB/E/F_N"/>
</dbReference>
<dbReference type="NCBIfam" id="TIGR00071">
    <property type="entry name" value="hisT_truA"/>
    <property type="match status" value="1"/>
</dbReference>
<dbReference type="PANTHER" id="PTHR11142">
    <property type="entry name" value="PSEUDOURIDYLATE SYNTHASE"/>
    <property type="match status" value="1"/>
</dbReference>
<dbReference type="PANTHER" id="PTHR11142:SF0">
    <property type="entry name" value="TRNA PSEUDOURIDINE SYNTHASE-LIKE 1"/>
    <property type="match status" value="1"/>
</dbReference>
<dbReference type="Pfam" id="PF01416">
    <property type="entry name" value="PseudoU_synth_1"/>
    <property type="match status" value="2"/>
</dbReference>
<dbReference type="PIRSF" id="PIRSF001430">
    <property type="entry name" value="tRNA_psdUrid_synth"/>
    <property type="match status" value="1"/>
</dbReference>
<dbReference type="SUPFAM" id="SSF55120">
    <property type="entry name" value="Pseudouridine synthase"/>
    <property type="match status" value="1"/>
</dbReference>
<keyword id="KW-0413">Isomerase</keyword>
<keyword id="KW-1185">Reference proteome</keyword>
<keyword id="KW-0819">tRNA processing</keyword>
<comment type="function">
    <text evidence="1">Formation of pseudouridine at positions 38, 39 and 40 in the anticodon stem and loop of transfer RNAs.</text>
</comment>
<comment type="catalytic activity">
    <reaction evidence="1">
        <text>uridine(38/39/40) in tRNA = pseudouridine(38/39/40) in tRNA</text>
        <dbReference type="Rhea" id="RHEA:22376"/>
        <dbReference type="Rhea" id="RHEA-COMP:10085"/>
        <dbReference type="Rhea" id="RHEA-COMP:10087"/>
        <dbReference type="ChEBI" id="CHEBI:65314"/>
        <dbReference type="ChEBI" id="CHEBI:65315"/>
        <dbReference type="EC" id="5.4.99.12"/>
    </reaction>
</comment>
<comment type="subunit">
    <text evidence="1">Homodimer.</text>
</comment>
<comment type="similarity">
    <text evidence="1">Belongs to the tRNA pseudouridine synthase TruA family.</text>
</comment>
<proteinExistence type="inferred from homology"/>